<keyword id="KW-0687">Ribonucleoprotein</keyword>
<keyword id="KW-0689">Ribosomal protein</keyword>
<reference key="1">
    <citation type="journal article" date="2008" name="J. Bacteriol.">
        <title>Insights into the environmental resistance gene pool from the genome sequence of the multidrug-resistant environmental isolate Escherichia coli SMS-3-5.</title>
        <authorList>
            <person name="Fricke W.F."/>
            <person name="Wright M.S."/>
            <person name="Lindell A.H."/>
            <person name="Harkins D.M."/>
            <person name="Baker-Austin C."/>
            <person name="Ravel J."/>
            <person name="Stepanauskas R."/>
        </authorList>
    </citation>
    <scope>NUCLEOTIDE SEQUENCE [LARGE SCALE GENOMIC DNA]</scope>
    <source>
        <strain>SMS-3-5 / SECEC</strain>
    </source>
</reference>
<protein>
    <recommendedName>
        <fullName evidence="1">Large ribosomal subunit protein uL13</fullName>
    </recommendedName>
    <alternativeName>
        <fullName evidence="2">50S ribosomal protein L13</fullName>
    </alternativeName>
</protein>
<comment type="function">
    <text evidence="1">This protein is one of the early assembly proteins of the 50S ribosomal subunit, although it is not seen to bind rRNA by itself. It is important during the early stages of 50S assembly.</text>
</comment>
<comment type="subunit">
    <text evidence="1">Part of the 50S ribosomal subunit.</text>
</comment>
<comment type="similarity">
    <text evidence="1">Belongs to the universal ribosomal protein uL13 family.</text>
</comment>
<accession>B1LGJ7</accession>
<organism>
    <name type="scientific">Escherichia coli (strain SMS-3-5 / SECEC)</name>
    <dbReference type="NCBI Taxonomy" id="439855"/>
    <lineage>
        <taxon>Bacteria</taxon>
        <taxon>Pseudomonadati</taxon>
        <taxon>Pseudomonadota</taxon>
        <taxon>Gammaproteobacteria</taxon>
        <taxon>Enterobacterales</taxon>
        <taxon>Enterobacteriaceae</taxon>
        <taxon>Escherichia</taxon>
    </lineage>
</organism>
<sequence length="142" mass="16019">MKTFTAKPETVKRDWYVVDATGKTLGRLATELARRLRGKHKAEYTPHVDTGDYIIVLNADKVAVTGNKRTDKVYYHHTGHIGGIKQATFEEMIARRPERVIEIAVKGMLPKGPLGRAMFRKLKVYAGNEHNHAAQQPQVLDI</sequence>
<name>RL13_ECOSM</name>
<proteinExistence type="inferred from homology"/>
<feature type="chain" id="PRO_1000144127" description="Large ribosomal subunit protein uL13">
    <location>
        <begin position="1"/>
        <end position="142"/>
    </location>
</feature>
<dbReference type="EMBL" id="CP000970">
    <property type="protein sequence ID" value="ACB17677.1"/>
    <property type="molecule type" value="Genomic_DNA"/>
</dbReference>
<dbReference type="RefSeq" id="WP_000847559.1">
    <property type="nucleotide sequence ID" value="NC_010498.1"/>
</dbReference>
<dbReference type="SMR" id="B1LGJ7"/>
<dbReference type="GeneID" id="89518067"/>
<dbReference type="KEGG" id="ecm:EcSMS35_3527"/>
<dbReference type="HOGENOM" id="CLU_082184_2_2_6"/>
<dbReference type="Proteomes" id="UP000007011">
    <property type="component" value="Chromosome"/>
</dbReference>
<dbReference type="GO" id="GO:0022625">
    <property type="term" value="C:cytosolic large ribosomal subunit"/>
    <property type="evidence" value="ECO:0007669"/>
    <property type="project" value="TreeGrafter"/>
</dbReference>
<dbReference type="GO" id="GO:0003729">
    <property type="term" value="F:mRNA binding"/>
    <property type="evidence" value="ECO:0007669"/>
    <property type="project" value="TreeGrafter"/>
</dbReference>
<dbReference type="GO" id="GO:0003735">
    <property type="term" value="F:structural constituent of ribosome"/>
    <property type="evidence" value="ECO:0007669"/>
    <property type="project" value="InterPro"/>
</dbReference>
<dbReference type="GO" id="GO:0017148">
    <property type="term" value="P:negative regulation of translation"/>
    <property type="evidence" value="ECO:0007669"/>
    <property type="project" value="TreeGrafter"/>
</dbReference>
<dbReference type="GO" id="GO:0006412">
    <property type="term" value="P:translation"/>
    <property type="evidence" value="ECO:0007669"/>
    <property type="project" value="UniProtKB-UniRule"/>
</dbReference>
<dbReference type="CDD" id="cd00392">
    <property type="entry name" value="Ribosomal_L13"/>
    <property type="match status" value="1"/>
</dbReference>
<dbReference type="FunFam" id="3.90.1180.10:FF:000001">
    <property type="entry name" value="50S ribosomal protein L13"/>
    <property type="match status" value="1"/>
</dbReference>
<dbReference type="Gene3D" id="3.90.1180.10">
    <property type="entry name" value="Ribosomal protein L13"/>
    <property type="match status" value="1"/>
</dbReference>
<dbReference type="HAMAP" id="MF_01366">
    <property type="entry name" value="Ribosomal_uL13"/>
    <property type="match status" value="1"/>
</dbReference>
<dbReference type="InterPro" id="IPR005822">
    <property type="entry name" value="Ribosomal_uL13"/>
</dbReference>
<dbReference type="InterPro" id="IPR005823">
    <property type="entry name" value="Ribosomal_uL13_bac-type"/>
</dbReference>
<dbReference type="InterPro" id="IPR023563">
    <property type="entry name" value="Ribosomal_uL13_CS"/>
</dbReference>
<dbReference type="InterPro" id="IPR036899">
    <property type="entry name" value="Ribosomal_uL13_sf"/>
</dbReference>
<dbReference type="NCBIfam" id="TIGR01066">
    <property type="entry name" value="rplM_bact"/>
    <property type="match status" value="1"/>
</dbReference>
<dbReference type="PANTHER" id="PTHR11545:SF2">
    <property type="entry name" value="LARGE RIBOSOMAL SUBUNIT PROTEIN UL13M"/>
    <property type="match status" value="1"/>
</dbReference>
<dbReference type="PANTHER" id="PTHR11545">
    <property type="entry name" value="RIBOSOMAL PROTEIN L13"/>
    <property type="match status" value="1"/>
</dbReference>
<dbReference type="Pfam" id="PF00572">
    <property type="entry name" value="Ribosomal_L13"/>
    <property type="match status" value="1"/>
</dbReference>
<dbReference type="PIRSF" id="PIRSF002181">
    <property type="entry name" value="Ribosomal_L13"/>
    <property type="match status" value="1"/>
</dbReference>
<dbReference type="SUPFAM" id="SSF52161">
    <property type="entry name" value="Ribosomal protein L13"/>
    <property type="match status" value="1"/>
</dbReference>
<dbReference type="PROSITE" id="PS00783">
    <property type="entry name" value="RIBOSOMAL_L13"/>
    <property type="match status" value="1"/>
</dbReference>
<gene>
    <name evidence="1" type="primary">rplM</name>
    <name type="ordered locus">EcSMS35_3527</name>
</gene>
<evidence type="ECO:0000255" key="1">
    <source>
        <dbReference type="HAMAP-Rule" id="MF_01366"/>
    </source>
</evidence>
<evidence type="ECO:0000305" key="2"/>